<reference key="1">
    <citation type="journal article" date="2011" name="Proc. Natl. Acad. Sci. U.S.A.">
        <title>Genomic anatomy of Escherichia coli O157:H7 outbreaks.</title>
        <authorList>
            <person name="Eppinger M."/>
            <person name="Mammel M.K."/>
            <person name="Leclerc J.E."/>
            <person name="Ravel J."/>
            <person name="Cebula T.A."/>
        </authorList>
    </citation>
    <scope>NUCLEOTIDE SEQUENCE [LARGE SCALE GENOMIC DNA]</scope>
    <source>
        <strain>EC4115 / EHEC</strain>
    </source>
</reference>
<comment type="function">
    <text evidence="1">Catalyzes the decarboxylation of four acetate groups of uroporphyrinogen-III to yield coproporphyrinogen-III.</text>
</comment>
<comment type="catalytic activity">
    <reaction evidence="1">
        <text>uroporphyrinogen III + 4 H(+) = coproporphyrinogen III + 4 CO2</text>
        <dbReference type="Rhea" id="RHEA:19865"/>
        <dbReference type="ChEBI" id="CHEBI:15378"/>
        <dbReference type="ChEBI" id="CHEBI:16526"/>
        <dbReference type="ChEBI" id="CHEBI:57308"/>
        <dbReference type="ChEBI" id="CHEBI:57309"/>
        <dbReference type="EC" id="4.1.1.37"/>
    </reaction>
</comment>
<comment type="pathway">
    <text evidence="1">Porphyrin-containing compound metabolism; protoporphyrin-IX biosynthesis; coproporphyrinogen-III from 5-aminolevulinate: step 4/4.</text>
</comment>
<comment type="subunit">
    <text evidence="1">Homodimer.</text>
</comment>
<comment type="subcellular location">
    <subcellularLocation>
        <location evidence="1">Cytoplasm</location>
    </subcellularLocation>
</comment>
<comment type="similarity">
    <text evidence="1">Belongs to the uroporphyrinogen decarboxylase family.</text>
</comment>
<accession>B5Z093</accession>
<organism>
    <name type="scientific">Escherichia coli O157:H7 (strain EC4115 / EHEC)</name>
    <dbReference type="NCBI Taxonomy" id="444450"/>
    <lineage>
        <taxon>Bacteria</taxon>
        <taxon>Pseudomonadati</taxon>
        <taxon>Pseudomonadota</taxon>
        <taxon>Gammaproteobacteria</taxon>
        <taxon>Enterobacterales</taxon>
        <taxon>Enterobacteriaceae</taxon>
        <taxon>Escherichia</taxon>
    </lineage>
</organism>
<feature type="chain" id="PRO_1000099989" description="Uroporphyrinogen decarboxylase">
    <location>
        <begin position="1"/>
        <end position="354"/>
    </location>
</feature>
<feature type="binding site" evidence="1">
    <location>
        <begin position="27"/>
        <end position="31"/>
    </location>
    <ligand>
        <name>substrate</name>
    </ligand>
</feature>
<feature type="binding site" evidence="1">
    <location>
        <position position="77"/>
    </location>
    <ligand>
        <name>substrate</name>
    </ligand>
</feature>
<feature type="binding site" evidence="1">
    <location>
        <position position="154"/>
    </location>
    <ligand>
        <name>substrate</name>
    </ligand>
</feature>
<feature type="binding site" evidence="1">
    <location>
        <position position="209"/>
    </location>
    <ligand>
        <name>substrate</name>
    </ligand>
</feature>
<feature type="binding site" evidence="1">
    <location>
        <position position="327"/>
    </location>
    <ligand>
        <name>substrate</name>
    </ligand>
</feature>
<feature type="site" description="Transition state stabilizer" evidence="1">
    <location>
        <position position="77"/>
    </location>
</feature>
<evidence type="ECO:0000255" key="1">
    <source>
        <dbReference type="HAMAP-Rule" id="MF_00218"/>
    </source>
</evidence>
<gene>
    <name evidence="1" type="primary">hemE</name>
    <name type="ordered locus">ECH74115_5466</name>
</gene>
<dbReference type="EC" id="4.1.1.37" evidence="1"/>
<dbReference type="EMBL" id="CP001164">
    <property type="protein sequence ID" value="ACI37164.1"/>
    <property type="molecule type" value="Genomic_DNA"/>
</dbReference>
<dbReference type="RefSeq" id="WP_000137640.1">
    <property type="nucleotide sequence ID" value="NC_011353.1"/>
</dbReference>
<dbReference type="SMR" id="B5Z093"/>
<dbReference type="KEGG" id="ecf:ECH74115_5466"/>
<dbReference type="HOGENOM" id="CLU_040933_0_0_6"/>
<dbReference type="UniPathway" id="UPA00251">
    <property type="reaction ID" value="UER00321"/>
</dbReference>
<dbReference type="GO" id="GO:0005829">
    <property type="term" value="C:cytosol"/>
    <property type="evidence" value="ECO:0007669"/>
    <property type="project" value="TreeGrafter"/>
</dbReference>
<dbReference type="GO" id="GO:0004853">
    <property type="term" value="F:uroporphyrinogen decarboxylase activity"/>
    <property type="evidence" value="ECO:0007669"/>
    <property type="project" value="UniProtKB-UniRule"/>
</dbReference>
<dbReference type="GO" id="GO:0019353">
    <property type="term" value="P:protoporphyrinogen IX biosynthetic process from glutamate"/>
    <property type="evidence" value="ECO:0007669"/>
    <property type="project" value="TreeGrafter"/>
</dbReference>
<dbReference type="CDD" id="cd00717">
    <property type="entry name" value="URO-D"/>
    <property type="match status" value="1"/>
</dbReference>
<dbReference type="FunFam" id="3.20.20.210:FF:000001">
    <property type="entry name" value="Uroporphyrinogen decarboxylase"/>
    <property type="match status" value="1"/>
</dbReference>
<dbReference type="Gene3D" id="3.20.20.210">
    <property type="match status" value="1"/>
</dbReference>
<dbReference type="HAMAP" id="MF_00218">
    <property type="entry name" value="URO_D"/>
    <property type="match status" value="1"/>
</dbReference>
<dbReference type="InterPro" id="IPR038071">
    <property type="entry name" value="UROD/MetE-like_sf"/>
</dbReference>
<dbReference type="InterPro" id="IPR006361">
    <property type="entry name" value="Uroporphyrinogen_deCO2ase_HemE"/>
</dbReference>
<dbReference type="InterPro" id="IPR000257">
    <property type="entry name" value="Uroporphyrinogen_deCOase"/>
</dbReference>
<dbReference type="NCBIfam" id="TIGR01464">
    <property type="entry name" value="hemE"/>
    <property type="match status" value="1"/>
</dbReference>
<dbReference type="PANTHER" id="PTHR21091">
    <property type="entry name" value="METHYLTETRAHYDROFOLATE:HOMOCYSTEINE METHYLTRANSFERASE RELATED"/>
    <property type="match status" value="1"/>
</dbReference>
<dbReference type="PANTHER" id="PTHR21091:SF169">
    <property type="entry name" value="UROPORPHYRINOGEN DECARBOXYLASE"/>
    <property type="match status" value="1"/>
</dbReference>
<dbReference type="Pfam" id="PF01208">
    <property type="entry name" value="URO-D"/>
    <property type="match status" value="1"/>
</dbReference>
<dbReference type="SUPFAM" id="SSF51726">
    <property type="entry name" value="UROD/MetE-like"/>
    <property type="match status" value="1"/>
</dbReference>
<dbReference type="PROSITE" id="PS00906">
    <property type="entry name" value="UROD_1"/>
    <property type="match status" value="1"/>
</dbReference>
<dbReference type="PROSITE" id="PS00907">
    <property type="entry name" value="UROD_2"/>
    <property type="match status" value="1"/>
</dbReference>
<protein>
    <recommendedName>
        <fullName evidence="1">Uroporphyrinogen decarboxylase</fullName>
        <shortName evidence="1">UPD</shortName>
        <shortName evidence="1">URO-D</shortName>
        <ecNumber evidence="1">4.1.1.37</ecNumber>
    </recommendedName>
</protein>
<keyword id="KW-0963">Cytoplasm</keyword>
<keyword id="KW-0210">Decarboxylase</keyword>
<keyword id="KW-0456">Lyase</keyword>
<keyword id="KW-0627">Porphyrin biosynthesis</keyword>
<name>DCUP_ECO5E</name>
<proteinExistence type="inferred from homology"/>
<sequence length="354" mass="39218">MTELKNDRYLRALLRQPVDVTPVWMMRQAGRYLPEYKATRAQAGDFMSLCKNAELACEVTLQPLRRYPLDAAILFSDILTVPDAMGLGLYFEAGEGPRFTSPVTCKADVDKLPIPDPEDELGYVMNAVRTIRRELKGEVPLIGFSGSPWTLATYMVEGGSSKAFTVIKKMMYADPQALHALLDKLAKSVALYLNAQIKAGAQAVMIFDTWGGVLTGRDYQQFSLYYMHKIVDGLLRENDGRRVPVTLFTKGGGQWLEAMAETGCDALGLDWTTDIADARRRVGNKVALQGNMDPSMLYAPPARIEEEVATILAGFGHGEGHVFNLGHGIHQDVPPEHAGVFVEAVHRLSEQYHR</sequence>